<keyword id="KW-1003">Cell membrane</keyword>
<keyword id="KW-0285">Flavoprotein</keyword>
<keyword id="KW-0288">FMN</keyword>
<keyword id="KW-0472">Membrane</keyword>
<keyword id="KW-0560">Oxidoreductase</keyword>
<keyword id="KW-0665">Pyrimidine biosynthesis</keyword>
<protein>
    <recommendedName>
        <fullName evidence="1">Dihydroorotate dehydrogenase (quinone)</fullName>
        <ecNumber evidence="1">1.3.5.2</ecNumber>
    </recommendedName>
    <alternativeName>
        <fullName evidence="1">DHOdehase</fullName>
        <shortName evidence="1">DHOD</shortName>
        <shortName evidence="1">DHODase</shortName>
    </alternativeName>
    <alternativeName>
        <fullName evidence="1">Dihydroorotate oxidase</fullName>
    </alternativeName>
</protein>
<sequence>MYYPFVRKALFQLDPERAHEFTFQQLRRITGTPFEALVRQKVPAKPVNCMGLTFKNPLGLAAGLDKDGECIDALGAMGFGSIEIGTVTPRPQPGNDKPRLFRLVDAEGLINRMGFNNLGVDNLVENVKKAHYDGVLGINIGKNKDTPVEQGKDDYLICMEKIYAYAGYIAINISSPNTPGLRTLQYGEALDDLLTAIKNKQNDLQAMHHKYVPIAVKIAPDLSEEELIQVADSLVRHNIDGVIATNTTLDRSLVQGMKNCDQTGGLSGRPLQLKSTEIIRRLSLELNGRLPIIGVGGIDSVIAAREKIAAGASLVQIYSGFIFKGPPLIKEIVTHI</sequence>
<comment type="function">
    <text evidence="1">Catalyzes the conversion of dihydroorotate to orotate with quinone as electron acceptor.</text>
</comment>
<comment type="catalytic activity">
    <reaction evidence="1">
        <text>(S)-dihydroorotate + a quinone = orotate + a quinol</text>
        <dbReference type="Rhea" id="RHEA:30187"/>
        <dbReference type="ChEBI" id="CHEBI:24646"/>
        <dbReference type="ChEBI" id="CHEBI:30839"/>
        <dbReference type="ChEBI" id="CHEBI:30864"/>
        <dbReference type="ChEBI" id="CHEBI:132124"/>
        <dbReference type="EC" id="1.3.5.2"/>
    </reaction>
</comment>
<comment type="cofactor">
    <cofactor evidence="1">
        <name>FMN</name>
        <dbReference type="ChEBI" id="CHEBI:58210"/>
    </cofactor>
    <text evidence="1">Binds 1 FMN per subunit.</text>
</comment>
<comment type="pathway">
    <text evidence="1">Pyrimidine metabolism; UMP biosynthesis via de novo pathway; orotate from (S)-dihydroorotate (quinone route): step 1/1.</text>
</comment>
<comment type="subunit">
    <text evidence="1">Monomer.</text>
</comment>
<comment type="subcellular location">
    <subcellularLocation>
        <location evidence="1">Cell membrane</location>
        <topology evidence="1">Peripheral membrane protein</topology>
    </subcellularLocation>
</comment>
<comment type="similarity">
    <text evidence="1">Belongs to the dihydroorotate dehydrogenase family. Type 2 subfamily.</text>
</comment>
<proteinExistence type="inferred from homology"/>
<feature type="chain" id="PRO_1000100261" description="Dihydroorotate dehydrogenase (quinone)">
    <location>
        <begin position="1"/>
        <end position="336"/>
    </location>
</feature>
<feature type="active site" description="Nucleophile" evidence="1">
    <location>
        <position position="175"/>
    </location>
</feature>
<feature type="binding site" evidence="1">
    <location>
        <begin position="62"/>
        <end position="66"/>
    </location>
    <ligand>
        <name>FMN</name>
        <dbReference type="ChEBI" id="CHEBI:58210"/>
    </ligand>
</feature>
<feature type="binding site" evidence="1">
    <location>
        <position position="66"/>
    </location>
    <ligand>
        <name>substrate</name>
    </ligand>
</feature>
<feature type="binding site" evidence="1">
    <location>
        <position position="86"/>
    </location>
    <ligand>
        <name>FMN</name>
        <dbReference type="ChEBI" id="CHEBI:58210"/>
    </ligand>
</feature>
<feature type="binding site" evidence="1">
    <location>
        <begin position="111"/>
        <end position="115"/>
    </location>
    <ligand>
        <name>substrate</name>
    </ligand>
</feature>
<feature type="binding site" evidence="1">
    <location>
        <position position="139"/>
    </location>
    <ligand>
        <name>FMN</name>
        <dbReference type="ChEBI" id="CHEBI:58210"/>
    </ligand>
</feature>
<feature type="binding site" evidence="1">
    <location>
        <position position="172"/>
    </location>
    <ligand>
        <name>FMN</name>
        <dbReference type="ChEBI" id="CHEBI:58210"/>
    </ligand>
</feature>
<feature type="binding site" evidence="1">
    <location>
        <position position="172"/>
    </location>
    <ligand>
        <name>substrate</name>
    </ligand>
</feature>
<feature type="binding site" evidence="1">
    <location>
        <position position="177"/>
    </location>
    <ligand>
        <name>substrate</name>
    </ligand>
</feature>
<feature type="binding site" evidence="1">
    <location>
        <position position="217"/>
    </location>
    <ligand>
        <name>FMN</name>
        <dbReference type="ChEBI" id="CHEBI:58210"/>
    </ligand>
</feature>
<feature type="binding site" evidence="1">
    <location>
        <position position="245"/>
    </location>
    <ligand>
        <name>FMN</name>
        <dbReference type="ChEBI" id="CHEBI:58210"/>
    </ligand>
</feature>
<feature type="binding site" evidence="1">
    <location>
        <begin position="246"/>
        <end position="247"/>
    </location>
    <ligand>
        <name>substrate</name>
    </ligand>
</feature>
<feature type="binding site" evidence="1">
    <location>
        <position position="268"/>
    </location>
    <ligand>
        <name>FMN</name>
        <dbReference type="ChEBI" id="CHEBI:58210"/>
    </ligand>
</feature>
<feature type="binding site" evidence="1">
    <location>
        <position position="297"/>
    </location>
    <ligand>
        <name>FMN</name>
        <dbReference type="ChEBI" id="CHEBI:58210"/>
    </ligand>
</feature>
<feature type="binding site" evidence="1">
    <location>
        <begin position="318"/>
        <end position="319"/>
    </location>
    <ligand>
        <name>FMN</name>
        <dbReference type="ChEBI" id="CHEBI:58210"/>
    </ligand>
</feature>
<organism>
    <name type="scientific">Escherichia coli O157:H7 (strain EC4115 / EHEC)</name>
    <dbReference type="NCBI Taxonomy" id="444450"/>
    <lineage>
        <taxon>Bacteria</taxon>
        <taxon>Pseudomonadati</taxon>
        <taxon>Pseudomonadota</taxon>
        <taxon>Gammaproteobacteria</taxon>
        <taxon>Enterobacterales</taxon>
        <taxon>Enterobacteriaceae</taxon>
        <taxon>Escherichia</taxon>
    </lineage>
</organism>
<name>PYRD_ECO5E</name>
<gene>
    <name evidence="1" type="primary">pyrD</name>
    <name type="ordered locus">ECH74115_1109</name>
</gene>
<dbReference type="EC" id="1.3.5.2" evidence="1"/>
<dbReference type="EMBL" id="CP001164">
    <property type="protein sequence ID" value="ACI36296.1"/>
    <property type="molecule type" value="Genomic_DNA"/>
</dbReference>
<dbReference type="RefSeq" id="WP_001295352.1">
    <property type="nucleotide sequence ID" value="NC_011353.1"/>
</dbReference>
<dbReference type="SMR" id="B5YT76"/>
<dbReference type="GeneID" id="93776469"/>
<dbReference type="KEGG" id="ecf:ECH74115_1109"/>
<dbReference type="HOGENOM" id="CLU_013640_2_0_6"/>
<dbReference type="UniPathway" id="UPA00070">
    <property type="reaction ID" value="UER00946"/>
</dbReference>
<dbReference type="GO" id="GO:0005737">
    <property type="term" value="C:cytoplasm"/>
    <property type="evidence" value="ECO:0007669"/>
    <property type="project" value="InterPro"/>
</dbReference>
<dbReference type="GO" id="GO:0005886">
    <property type="term" value="C:plasma membrane"/>
    <property type="evidence" value="ECO:0007669"/>
    <property type="project" value="UniProtKB-SubCell"/>
</dbReference>
<dbReference type="GO" id="GO:0106430">
    <property type="term" value="F:dihydroorotate dehydrogenase (quinone) activity"/>
    <property type="evidence" value="ECO:0007669"/>
    <property type="project" value="UniProtKB-EC"/>
</dbReference>
<dbReference type="GO" id="GO:0006207">
    <property type="term" value="P:'de novo' pyrimidine nucleobase biosynthetic process"/>
    <property type="evidence" value="ECO:0007669"/>
    <property type="project" value="InterPro"/>
</dbReference>
<dbReference type="GO" id="GO:0044205">
    <property type="term" value="P:'de novo' UMP biosynthetic process"/>
    <property type="evidence" value="ECO:0007669"/>
    <property type="project" value="UniProtKB-UniRule"/>
</dbReference>
<dbReference type="CDD" id="cd04738">
    <property type="entry name" value="DHOD_2_like"/>
    <property type="match status" value="1"/>
</dbReference>
<dbReference type="FunFam" id="3.20.20.70:FF:000028">
    <property type="entry name" value="Dihydroorotate dehydrogenase (quinone)"/>
    <property type="match status" value="1"/>
</dbReference>
<dbReference type="Gene3D" id="3.20.20.70">
    <property type="entry name" value="Aldolase class I"/>
    <property type="match status" value="1"/>
</dbReference>
<dbReference type="HAMAP" id="MF_00225">
    <property type="entry name" value="DHO_dh_type2"/>
    <property type="match status" value="1"/>
</dbReference>
<dbReference type="InterPro" id="IPR013785">
    <property type="entry name" value="Aldolase_TIM"/>
</dbReference>
<dbReference type="InterPro" id="IPR050074">
    <property type="entry name" value="DHO_dehydrogenase"/>
</dbReference>
<dbReference type="InterPro" id="IPR012135">
    <property type="entry name" value="Dihydroorotate_DH_1_2"/>
</dbReference>
<dbReference type="InterPro" id="IPR005719">
    <property type="entry name" value="Dihydroorotate_DH_2"/>
</dbReference>
<dbReference type="InterPro" id="IPR005720">
    <property type="entry name" value="Dihydroorotate_DH_cat"/>
</dbReference>
<dbReference type="InterPro" id="IPR001295">
    <property type="entry name" value="Dihydroorotate_DH_CS"/>
</dbReference>
<dbReference type="NCBIfam" id="NF003644">
    <property type="entry name" value="PRK05286.1-1"/>
    <property type="match status" value="1"/>
</dbReference>
<dbReference type="NCBIfam" id="NF003645">
    <property type="entry name" value="PRK05286.1-2"/>
    <property type="match status" value="1"/>
</dbReference>
<dbReference type="NCBIfam" id="NF003646">
    <property type="entry name" value="PRK05286.1-4"/>
    <property type="match status" value="1"/>
</dbReference>
<dbReference type="NCBIfam" id="NF003652">
    <property type="entry name" value="PRK05286.2-5"/>
    <property type="match status" value="1"/>
</dbReference>
<dbReference type="NCBIfam" id="TIGR01036">
    <property type="entry name" value="pyrD_sub2"/>
    <property type="match status" value="1"/>
</dbReference>
<dbReference type="PANTHER" id="PTHR48109:SF4">
    <property type="entry name" value="DIHYDROOROTATE DEHYDROGENASE (QUINONE), MITOCHONDRIAL"/>
    <property type="match status" value="1"/>
</dbReference>
<dbReference type="PANTHER" id="PTHR48109">
    <property type="entry name" value="DIHYDROOROTATE DEHYDROGENASE (QUINONE), MITOCHONDRIAL-RELATED"/>
    <property type="match status" value="1"/>
</dbReference>
<dbReference type="Pfam" id="PF01180">
    <property type="entry name" value="DHO_dh"/>
    <property type="match status" value="1"/>
</dbReference>
<dbReference type="PIRSF" id="PIRSF000164">
    <property type="entry name" value="DHO_oxidase"/>
    <property type="match status" value="1"/>
</dbReference>
<dbReference type="SUPFAM" id="SSF51395">
    <property type="entry name" value="FMN-linked oxidoreductases"/>
    <property type="match status" value="1"/>
</dbReference>
<dbReference type="PROSITE" id="PS00911">
    <property type="entry name" value="DHODEHASE_1"/>
    <property type="match status" value="1"/>
</dbReference>
<dbReference type="PROSITE" id="PS00912">
    <property type="entry name" value="DHODEHASE_2"/>
    <property type="match status" value="1"/>
</dbReference>
<reference key="1">
    <citation type="journal article" date="2011" name="Proc. Natl. Acad. Sci. U.S.A.">
        <title>Genomic anatomy of Escherichia coli O157:H7 outbreaks.</title>
        <authorList>
            <person name="Eppinger M."/>
            <person name="Mammel M.K."/>
            <person name="Leclerc J.E."/>
            <person name="Ravel J."/>
            <person name="Cebula T.A."/>
        </authorList>
    </citation>
    <scope>NUCLEOTIDE SEQUENCE [LARGE SCALE GENOMIC DNA]</scope>
    <source>
        <strain>EC4115 / EHEC</strain>
    </source>
</reference>
<evidence type="ECO:0000255" key="1">
    <source>
        <dbReference type="HAMAP-Rule" id="MF_00225"/>
    </source>
</evidence>
<accession>B5YT76</accession>